<feature type="chain" id="PRO_0000151292" description="Ketol-acid reductoisomerase (NADP(+))">
    <location>
        <begin position="1"/>
        <end position="489"/>
    </location>
</feature>
<feature type="domain" description="KARI N-terminal Rossmann" evidence="2">
    <location>
        <begin position="16"/>
        <end position="207"/>
    </location>
</feature>
<feature type="domain" description="KARI C-terminal knotted 1" evidence="3">
    <location>
        <begin position="208"/>
        <end position="343"/>
    </location>
</feature>
<feature type="domain" description="KARI C-terminal knotted 2" evidence="3">
    <location>
        <begin position="344"/>
        <end position="483"/>
    </location>
</feature>
<feature type="active site" evidence="1">
    <location>
        <position position="131"/>
    </location>
</feature>
<feature type="binding site" evidence="1">
    <location>
        <begin position="44"/>
        <end position="47"/>
    </location>
    <ligand>
        <name>NADP(+)</name>
        <dbReference type="ChEBI" id="CHEBI:58349"/>
    </ligand>
</feature>
<feature type="binding site" evidence="1">
    <location>
        <position position="67"/>
    </location>
    <ligand>
        <name>NADP(+)</name>
        <dbReference type="ChEBI" id="CHEBI:58349"/>
    </ligand>
</feature>
<feature type="binding site" evidence="1">
    <location>
        <position position="77"/>
    </location>
    <ligand>
        <name>NADP(+)</name>
        <dbReference type="ChEBI" id="CHEBI:58349"/>
    </ligand>
</feature>
<feature type="binding site" evidence="1">
    <location>
        <begin position="107"/>
        <end position="109"/>
    </location>
    <ligand>
        <name>NADP(+)</name>
        <dbReference type="ChEBI" id="CHEBI:58349"/>
    </ligand>
</feature>
<feature type="binding site" evidence="1">
    <location>
        <position position="157"/>
    </location>
    <ligand>
        <name>NADP(+)</name>
        <dbReference type="ChEBI" id="CHEBI:58349"/>
    </ligand>
</feature>
<feature type="binding site" evidence="1">
    <location>
        <position position="216"/>
    </location>
    <ligand>
        <name>Mg(2+)</name>
        <dbReference type="ChEBI" id="CHEBI:18420"/>
        <label>1</label>
    </ligand>
</feature>
<feature type="binding site" evidence="1">
    <location>
        <position position="216"/>
    </location>
    <ligand>
        <name>Mg(2+)</name>
        <dbReference type="ChEBI" id="CHEBI:18420"/>
        <label>2</label>
    </ligand>
</feature>
<feature type="binding site" evidence="1">
    <location>
        <position position="220"/>
    </location>
    <ligand>
        <name>Mg(2+)</name>
        <dbReference type="ChEBI" id="CHEBI:18420"/>
        <label>1</label>
    </ligand>
</feature>
<feature type="binding site" evidence="1">
    <location>
        <position position="388"/>
    </location>
    <ligand>
        <name>Mg(2+)</name>
        <dbReference type="ChEBI" id="CHEBI:18420"/>
        <label>2</label>
    </ligand>
</feature>
<feature type="binding site" evidence="1">
    <location>
        <position position="392"/>
    </location>
    <ligand>
        <name>Mg(2+)</name>
        <dbReference type="ChEBI" id="CHEBI:18420"/>
        <label>2</label>
    </ligand>
</feature>
<feature type="binding site" evidence="1">
    <location>
        <position position="413"/>
    </location>
    <ligand>
        <name>substrate</name>
    </ligand>
</feature>
<keyword id="KW-0028">Amino-acid biosynthesis</keyword>
<keyword id="KW-0100">Branched-chain amino acid biosynthesis</keyword>
<keyword id="KW-0460">Magnesium</keyword>
<keyword id="KW-0479">Metal-binding</keyword>
<keyword id="KW-0521">NADP</keyword>
<keyword id="KW-0560">Oxidoreductase</keyword>
<keyword id="KW-0677">Repeat</keyword>
<reference key="1">
    <citation type="journal article" date="1999" name="Mol. Biol. Evol.">
        <title>Sequence evolution in bacterial endosymbionts having extreme base compositions.</title>
        <authorList>
            <person name="Clark M.A."/>
            <person name="Moran N.A."/>
            <person name="Baumann P."/>
        </authorList>
    </citation>
    <scope>NUCLEOTIDE SEQUENCE [GENOMIC DNA]</scope>
</reference>
<dbReference type="EC" id="1.1.1.86" evidence="1"/>
<dbReference type="EMBL" id="AF130813">
    <property type="protein sequence ID" value="AAF13803.1"/>
    <property type="molecule type" value="Genomic_DNA"/>
</dbReference>
<dbReference type="SMR" id="Q9RQ51"/>
<dbReference type="STRING" id="118110.XW81_02775"/>
<dbReference type="UniPathway" id="UPA00047">
    <property type="reaction ID" value="UER00056"/>
</dbReference>
<dbReference type="UniPathway" id="UPA00049">
    <property type="reaction ID" value="UER00060"/>
</dbReference>
<dbReference type="GO" id="GO:0005829">
    <property type="term" value="C:cytosol"/>
    <property type="evidence" value="ECO:0007669"/>
    <property type="project" value="TreeGrafter"/>
</dbReference>
<dbReference type="GO" id="GO:0004455">
    <property type="term" value="F:ketol-acid reductoisomerase activity"/>
    <property type="evidence" value="ECO:0007669"/>
    <property type="project" value="UniProtKB-UniRule"/>
</dbReference>
<dbReference type="GO" id="GO:0000287">
    <property type="term" value="F:magnesium ion binding"/>
    <property type="evidence" value="ECO:0007669"/>
    <property type="project" value="UniProtKB-UniRule"/>
</dbReference>
<dbReference type="GO" id="GO:0009097">
    <property type="term" value="P:isoleucine biosynthetic process"/>
    <property type="evidence" value="ECO:0007669"/>
    <property type="project" value="UniProtKB-UniRule"/>
</dbReference>
<dbReference type="GO" id="GO:0009099">
    <property type="term" value="P:L-valine biosynthetic process"/>
    <property type="evidence" value="ECO:0007669"/>
    <property type="project" value="UniProtKB-UniRule"/>
</dbReference>
<dbReference type="Gene3D" id="1.10.1040.10">
    <property type="entry name" value="N-(1-d-carboxylethyl)-l-norvaline Dehydrogenase, domain 2"/>
    <property type="match status" value="1"/>
</dbReference>
<dbReference type="Gene3D" id="3.40.50.720">
    <property type="entry name" value="NAD(P)-binding Rossmann-like Domain"/>
    <property type="match status" value="1"/>
</dbReference>
<dbReference type="HAMAP" id="MF_00435">
    <property type="entry name" value="IlvC"/>
    <property type="match status" value="1"/>
</dbReference>
<dbReference type="InterPro" id="IPR008927">
    <property type="entry name" value="6-PGluconate_DH-like_C_sf"/>
</dbReference>
<dbReference type="InterPro" id="IPR013328">
    <property type="entry name" value="6PGD_dom2"/>
</dbReference>
<dbReference type="InterPro" id="IPR013023">
    <property type="entry name" value="KARI"/>
</dbReference>
<dbReference type="InterPro" id="IPR000506">
    <property type="entry name" value="KARI_C"/>
</dbReference>
<dbReference type="InterPro" id="IPR013116">
    <property type="entry name" value="KARI_N"/>
</dbReference>
<dbReference type="InterPro" id="IPR036291">
    <property type="entry name" value="NAD(P)-bd_dom_sf"/>
</dbReference>
<dbReference type="NCBIfam" id="TIGR00465">
    <property type="entry name" value="ilvC"/>
    <property type="match status" value="1"/>
</dbReference>
<dbReference type="NCBIfam" id="NF003557">
    <property type="entry name" value="PRK05225.1"/>
    <property type="match status" value="1"/>
</dbReference>
<dbReference type="PANTHER" id="PTHR21371">
    <property type="entry name" value="KETOL-ACID REDUCTOISOMERASE, MITOCHONDRIAL"/>
    <property type="match status" value="1"/>
</dbReference>
<dbReference type="PANTHER" id="PTHR21371:SF1">
    <property type="entry name" value="KETOL-ACID REDUCTOISOMERASE, MITOCHONDRIAL"/>
    <property type="match status" value="1"/>
</dbReference>
<dbReference type="Pfam" id="PF01450">
    <property type="entry name" value="KARI_C"/>
    <property type="match status" value="2"/>
</dbReference>
<dbReference type="Pfam" id="PF07991">
    <property type="entry name" value="KARI_N"/>
    <property type="match status" value="1"/>
</dbReference>
<dbReference type="SUPFAM" id="SSF48179">
    <property type="entry name" value="6-phosphogluconate dehydrogenase C-terminal domain-like"/>
    <property type="match status" value="2"/>
</dbReference>
<dbReference type="SUPFAM" id="SSF51735">
    <property type="entry name" value="NAD(P)-binding Rossmann-fold domains"/>
    <property type="match status" value="1"/>
</dbReference>
<dbReference type="PROSITE" id="PS51851">
    <property type="entry name" value="KARI_C"/>
    <property type="match status" value="2"/>
</dbReference>
<dbReference type="PROSITE" id="PS51850">
    <property type="entry name" value="KARI_N"/>
    <property type="match status" value="1"/>
</dbReference>
<name>ILVC_BUCSC</name>
<protein>
    <recommendedName>
        <fullName evidence="1">Ketol-acid reductoisomerase (NADP(+))</fullName>
        <shortName evidence="1">KARI</shortName>
        <ecNumber evidence="1">1.1.1.86</ecNumber>
    </recommendedName>
    <alternativeName>
        <fullName evidence="1">Acetohydroxy-acid isomeroreductase</fullName>
        <shortName evidence="1">AHIR</shortName>
    </alternativeName>
    <alternativeName>
        <fullName evidence="1">Alpha-keto-beta-hydroxylacyl reductoisomerase</fullName>
    </alternativeName>
    <alternativeName>
        <fullName evidence="1">Ketol-acid reductoisomerase type 2</fullName>
    </alternativeName>
    <alternativeName>
        <fullName evidence="1">Ketol-acid reductoisomerase type II</fullName>
    </alternativeName>
</protein>
<evidence type="ECO:0000255" key="1">
    <source>
        <dbReference type="HAMAP-Rule" id="MF_00435"/>
    </source>
</evidence>
<evidence type="ECO:0000255" key="2">
    <source>
        <dbReference type="PROSITE-ProRule" id="PRU01197"/>
    </source>
</evidence>
<evidence type="ECO:0000255" key="3">
    <source>
        <dbReference type="PROSITE-ProRule" id="PRU01198"/>
    </source>
</evidence>
<organism>
    <name type="scientific">Buchnera aphidicola subsp. Schlechtendalia chinensis</name>
    <dbReference type="NCBI Taxonomy" id="118110"/>
    <lineage>
        <taxon>Bacteria</taxon>
        <taxon>Pseudomonadati</taxon>
        <taxon>Pseudomonadota</taxon>
        <taxon>Gammaproteobacteria</taxon>
        <taxon>Enterobacterales</taxon>
        <taxon>Erwiniaceae</taxon>
        <taxon>Buchnera</taxon>
    </lineage>
</organism>
<gene>
    <name evidence="1" type="primary">ilvC</name>
</gene>
<sequence>MNYFNSLNFRQKLINLRKCKLVEKNFFSKKCDILKRKNIVIVGCGSQGLNQGLNMRDSGLHVSYALRGSSILNKNKSWENATKNNFFVDTYENIIPTADLVINLTPDKQRKEVVTLLQKFMKENSVLGFSHGFHIVEIGQKIRNDITVIMVAPKCPGTEVREEYKKGFGVPSLIAVHMENDPKKIGFEIAKAWAYSLGSHRAGVLHSSFIAEVKSDLMGEQTILCGMLQTSSLVCYDQLVSQGKDPNYAGKLIQLGWESITESVKHGGITLMLNRLSNTAKIRAYILSKKLKVMFSSLFRKHMDDIISGEFSKNMIDDWNSDDKKLKEWRTQIKKTDFEKCKICHKEISEQEYFDQGLLMVAILKAGIELSFEIMVETGIKEESAYYESLHELPLIANTIARKRLYEMNLVISDTAEYGSYLFSQSAIPLLKEFMNELCPGDLGEKISDLQFDNVTLNKINHDIENHPVEIIGKKLRKYMVDMKPIKLS</sequence>
<proteinExistence type="inferred from homology"/>
<comment type="function">
    <text evidence="1">Involved in the biosynthesis of branched-chain amino acids (BCAA). Catalyzes an alkyl-migration followed by a ketol-acid reduction of (S)-2-acetolactate (S2AL) to yield (R)-2,3-dihydroxy-isovalerate. In the isomerase reaction, S2AL is rearranged via a Mg-dependent methyl migration to produce 3-hydroxy-3-methyl-2-ketobutyrate (HMKB). In the reductase reaction, this 2-ketoacid undergoes a metal-dependent reduction by NADPH to yield (R)-2,3-dihydroxy-isovalerate.</text>
</comment>
<comment type="catalytic activity">
    <reaction evidence="1">
        <text>(2R)-2,3-dihydroxy-3-methylbutanoate + NADP(+) = (2S)-2-acetolactate + NADPH + H(+)</text>
        <dbReference type="Rhea" id="RHEA:22068"/>
        <dbReference type="ChEBI" id="CHEBI:15378"/>
        <dbReference type="ChEBI" id="CHEBI:49072"/>
        <dbReference type="ChEBI" id="CHEBI:57783"/>
        <dbReference type="ChEBI" id="CHEBI:58349"/>
        <dbReference type="ChEBI" id="CHEBI:58476"/>
        <dbReference type="EC" id="1.1.1.86"/>
    </reaction>
</comment>
<comment type="catalytic activity">
    <reaction evidence="1">
        <text>(2R,3R)-2,3-dihydroxy-3-methylpentanoate + NADP(+) = (S)-2-ethyl-2-hydroxy-3-oxobutanoate + NADPH + H(+)</text>
        <dbReference type="Rhea" id="RHEA:13493"/>
        <dbReference type="ChEBI" id="CHEBI:15378"/>
        <dbReference type="ChEBI" id="CHEBI:49256"/>
        <dbReference type="ChEBI" id="CHEBI:49258"/>
        <dbReference type="ChEBI" id="CHEBI:57783"/>
        <dbReference type="ChEBI" id="CHEBI:58349"/>
        <dbReference type="EC" id="1.1.1.86"/>
    </reaction>
</comment>
<comment type="cofactor">
    <cofactor evidence="1">
        <name>Mg(2+)</name>
        <dbReference type="ChEBI" id="CHEBI:18420"/>
    </cofactor>
    <text evidence="1">Binds 2 magnesium ions per subunit.</text>
</comment>
<comment type="pathway">
    <text evidence="1">Amino-acid biosynthesis; L-isoleucine biosynthesis; L-isoleucine from 2-oxobutanoate: step 2/4.</text>
</comment>
<comment type="pathway">
    <text evidence="1">Amino-acid biosynthesis; L-valine biosynthesis; L-valine from pyruvate: step 2/4.</text>
</comment>
<comment type="similarity">
    <text evidence="1">Belongs to the ketol-acid reductoisomerase family.</text>
</comment>
<accession>Q9RQ51</accession>